<gene>
    <name evidence="1" type="primary">fhs2</name>
    <name type="ordered locus">SSA_1200</name>
</gene>
<evidence type="ECO:0000255" key="1">
    <source>
        <dbReference type="HAMAP-Rule" id="MF_01543"/>
    </source>
</evidence>
<reference key="1">
    <citation type="journal article" date="2007" name="J. Bacteriol.">
        <title>Genome of the opportunistic pathogen Streptococcus sanguinis.</title>
        <authorList>
            <person name="Xu P."/>
            <person name="Alves J.M."/>
            <person name="Kitten T."/>
            <person name="Brown A."/>
            <person name="Chen Z."/>
            <person name="Ozaki L.S."/>
            <person name="Manque P."/>
            <person name="Ge X."/>
            <person name="Serrano M.G."/>
            <person name="Puiu D."/>
            <person name="Hendricks S."/>
            <person name="Wang Y."/>
            <person name="Chaplin M.D."/>
            <person name="Akan D."/>
            <person name="Paik S."/>
            <person name="Peterson D.L."/>
            <person name="Macrina F.L."/>
            <person name="Buck G.A."/>
        </authorList>
    </citation>
    <scope>NUCLEOTIDE SEQUENCE [LARGE SCALE GENOMIC DNA]</scope>
    <source>
        <strain>SK36</strain>
    </source>
</reference>
<keyword id="KW-0067">ATP-binding</keyword>
<keyword id="KW-0436">Ligase</keyword>
<keyword id="KW-0547">Nucleotide-binding</keyword>
<keyword id="KW-0554">One-carbon metabolism</keyword>
<keyword id="KW-1185">Reference proteome</keyword>
<comment type="catalytic activity">
    <reaction evidence="1">
        <text>(6S)-5,6,7,8-tetrahydrofolate + formate + ATP = (6R)-10-formyltetrahydrofolate + ADP + phosphate</text>
        <dbReference type="Rhea" id="RHEA:20221"/>
        <dbReference type="ChEBI" id="CHEBI:15740"/>
        <dbReference type="ChEBI" id="CHEBI:30616"/>
        <dbReference type="ChEBI" id="CHEBI:43474"/>
        <dbReference type="ChEBI" id="CHEBI:57453"/>
        <dbReference type="ChEBI" id="CHEBI:195366"/>
        <dbReference type="ChEBI" id="CHEBI:456216"/>
        <dbReference type="EC" id="6.3.4.3"/>
    </reaction>
</comment>
<comment type="pathway">
    <text evidence="1">One-carbon metabolism; tetrahydrofolate interconversion.</text>
</comment>
<comment type="similarity">
    <text evidence="1">Belongs to the formate--tetrahydrofolate ligase family.</text>
</comment>
<proteinExistence type="inferred from homology"/>
<protein>
    <recommendedName>
        <fullName evidence="1">Formate--tetrahydrofolate ligase 2</fullName>
        <ecNumber evidence="1">6.3.4.3</ecNumber>
    </recommendedName>
    <alternativeName>
        <fullName evidence="1">Formyltetrahydrofolate synthetase 2</fullName>
        <shortName evidence="1">FHS 2</shortName>
        <shortName evidence="1">FTHFS 2</shortName>
    </alternativeName>
</protein>
<name>FTHS2_STRSV</name>
<sequence>MKTDIEIAQSVELQPIVDVVKKVGIDYDDLELYGKYKAKLSFDKIREVEKNPVGKLILVTAINPTPAGEGKSTITIGLADALNKIGKKTMIAIREPSLGPVMGIKGGAAGGGHAQVLPMEDINLHFTGDMHAITTANNALSALIDNHLHQGNALGIDQRRIIWKRVVDLNDRALRHVTVGLGSPVNGIPREDGFDITVASEIMAILCLATDIEDLKKRLANIVIGYRYDRTPVYVRDLEVEGALALVLKDAIKPNLVQTIYGTPAFVHGGPFANIAHGCNSVLATSTALRLADYTVTEAGFGADLGAEKFLDIKTPNLPTSPDAVVIVATLRALKMNGGVAKDALTEENVEAVRAGFANLKRHVENIRKFGIPAVVAINEFVSDTEAEVATLKELCAEIGVPVELASVWADGAEGGVTLAETVVKTIAEEPAHYTRLYDNDLSIEEKIEKIVTEIYRGSKVNFEKKAQTQIREIVKNSWDKLPICMAKTQYSFSDNPASLGAPENFEITIRELVPKLGAGFIVALTGDVMTMPGLPKRPAALNMDVAADGTAIGLF</sequence>
<dbReference type="EC" id="6.3.4.3" evidence="1"/>
<dbReference type="EMBL" id="CP000387">
    <property type="protein sequence ID" value="ABN44604.1"/>
    <property type="molecule type" value="Genomic_DNA"/>
</dbReference>
<dbReference type="RefSeq" id="WP_011836985.1">
    <property type="nucleotide sequence ID" value="NC_009009.1"/>
</dbReference>
<dbReference type="RefSeq" id="YP_001035154.1">
    <property type="nucleotide sequence ID" value="NC_009009.1"/>
</dbReference>
<dbReference type="SMR" id="A3CN49"/>
<dbReference type="STRING" id="388919.SSA_1200"/>
<dbReference type="KEGG" id="ssa:SSA_1200"/>
<dbReference type="PATRIC" id="fig|388919.9.peg.1141"/>
<dbReference type="eggNOG" id="COG2759">
    <property type="taxonomic scope" value="Bacteria"/>
</dbReference>
<dbReference type="HOGENOM" id="CLU_003601_3_3_9"/>
<dbReference type="OrthoDB" id="9761733at2"/>
<dbReference type="UniPathway" id="UPA00193"/>
<dbReference type="Proteomes" id="UP000002148">
    <property type="component" value="Chromosome"/>
</dbReference>
<dbReference type="GO" id="GO:0005524">
    <property type="term" value="F:ATP binding"/>
    <property type="evidence" value="ECO:0007669"/>
    <property type="project" value="UniProtKB-UniRule"/>
</dbReference>
<dbReference type="GO" id="GO:0004329">
    <property type="term" value="F:formate-tetrahydrofolate ligase activity"/>
    <property type="evidence" value="ECO:0007669"/>
    <property type="project" value="UniProtKB-UniRule"/>
</dbReference>
<dbReference type="GO" id="GO:0035999">
    <property type="term" value="P:tetrahydrofolate interconversion"/>
    <property type="evidence" value="ECO:0007669"/>
    <property type="project" value="UniProtKB-UniRule"/>
</dbReference>
<dbReference type="CDD" id="cd00477">
    <property type="entry name" value="FTHFS"/>
    <property type="match status" value="1"/>
</dbReference>
<dbReference type="FunFam" id="3.30.1510.10:FF:000001">
    <property type="entry name" value="Formate--tetrahydrofolate ligase"/>
    <property type="match status" value="1"/>
</dbReference>
<dbReference type="FunFam" id="3.10.410.10:FF:000001">
    <property type="entry name" value="Putative formate--tetrahydrofolate ligase"/>
    <property type="match status" value="1"/>
</dbReference>
<dbReference type="Gene3D" id="3.30.1510.10">
    <property type="entry name" value="Domain 2, N(10)-formyltetrahydrofolate synthetase"/>
    <property type="match status" value="1"/>
</dbReference>
<dbReference type="Gene3D" id="3.10.410.10">
    <property type="entry name" value="Formyltetrahydrofolate synthetase, domain 3"/>
    <property type="match status" value="1"/>
</dbReference>
<dbReference type="Gene3D" id="3.40.50.300">
    <property type="entry name" value="P-loop containing nucleotide triphosphate hydrolases"/>
    <property type="match status" value="1"/>
</dbReference>
<dbReference type="HAMAP" id="MF_01543">
    <property type="entry name" value="FTHFS"/>
    <property type="match status" value="1"/>
</dbReference>
<dbReference type="InterPro" id="IPR000559">
    <property type="entry name" value="Formate_THF_ligase"/>
</dbReference>
<dbReference type="InterPro" id="IPR020628">
    <property type="entry name" value="Formate_THF_ligase_CS"/>
</dbReference>
<dbReference type="InterPro" id="IPR027417">
    <property type="entry name" value="P-loop_NTPase"/>
</dbReference>
<dbReference type="NCBIfam" id="NF010030">
    <property type="entry name" value="PRK13505.1"/>
    <property type="match status" value="1"/>
</dbReference>
<dbReference type="Pfam" id="PF01268">
    <property type="entry name" value="FTHFS"/>
    <property type="match status" value="1"/>
</dbReference>
<dbReference type="SUPFAM" id="SSF52540">
    <property type="entry name" value="P-loop containing nucleoside triphosphate hydrolases"/>
    <property type="match status" value="1"/>
</dbReference>
<dbReference type="PROSITE" id="PS00721">
    <property type="entry name" value="FTHFS_1"/>
    <property type="match status" value="1"/>
</dbReference>
<dbReference type="PROSITE" id="PS00722">
    <property type="entry name" value="FTHFS_2"/>
    <property type="match status" value="1"/>
</dbReference>
<accession>A3CN49</accession>
<feature type="chain" id="PRO_0000293070" description="Formate--tetrahydrofolate ligase 2">
    <location>
        <begin position="1"/>
        <end position="556"/>
    </location>
</feature>
<feature type="binding site" evidence="1">
    <location>
        <begin position="65"/>
        <end position="72"/>
    </location>
    <ligand>
        <name>ATP</name>
        <dbReference type="ChEBI" id="CHEBI:30616"/>
    </ligand>
</feature>
<organism>
    <name type="scientific">Streptococcus sanguinis (strain SK36)</name>
    <dbReference type="NCBI Taxonomy" id="388919"/>
    <lineage>
        <taxon>Bacteria</taxon>
        <taxon>Bacillati</taxon>
        <taxon>Bacillota</taxon>
        <taxon>Bacilli</taxon>
        <taxon>Lactobacillales</taxon>
        <taxon>Streptococcaceae</taxon>
        <taxon>Streptococcus</taxon>
    </lineage>
</organism>